<evidence type="ECO:0000255" key="1">
    <source>
        <dbReference type="PROSITE-ProRule" id="PRU00176"/>
    </source>
</evidence>
<evidence type="ECO:0000256" key="2">
    <source>
        <dbReference type="SAM" id="MobiDB-lite"/>
    </source>
</evidence>
<evidence type="ECO:0000269" key="3">
    <source>
    </source>
</evidence>
<evidence type="ECO:0000269" key="4">
    <source>
    </source>
</evidence>
<evidence type="ECO:0000269" key="5">
    <source>
    </source>
</evidence>
<evidence type="ECO:0000269" key="6">
    <source>
    </source>
</evidence>
<evidence type="ECO:0000269" key="7">
    <source>
    </source>
</evidence>
<evidence type="ECO:0000269" key="8">
    <source>
    </source>
</evidence>
<evidence type="ECO:0000269" key="9">
    <source>
    </source>
</evidence>
<evidence type="ECO:0000269" key="10">
    <source>
    </source>
</evidence>
<evidence type="ECO:0000269" key="11">
    <source>
    </source>
</evidence>
<evidence type="ECO:0000269" key="12">
    <source>
    </source>
</evidence>
<evidence type="ECO:0000269" key="13">
    <source>
    </source>
</evidence>
<evidence type="ECO:0000269" key="14">
    <source>
    </source>
</evidence>
<evidence type="ECO:0000269" key="15">
    <source>
    </source>
</evidence>
<evidence type="ECO:0000269" key="16">
    <source>
    </source>
</evidence>
<evidence type="ECO:0000303" key="17">
    <source>
    </source>
</evidence>
<evidence type="ECO:0000303" key="18">
    <source>
    </source>
</evidence>
<evidence type="ECO:0000303" key="19">
    <source>
    </source>
</evidence>
<evidence type="ECO:0000305" key="20"/>
<evidence type="ECO:0007744" key="21">
    <source>
        <dbReference type="PDB" id="5ZWN"/>
    </source>
</evidence>
<evidence type="ECO:0007744" key="22">
    <source>
        <dbReference type="PDB" id="6G90"/>
    </source>
</evidence>
<evidence type="ECO:0007744" key="23">
    <source>
        <dbReference type="PDB" id="6N7P"/>
    </source>
</evidence>
<evidence type="ECO:0007744" key="24">
    <source>
        <dbReference type="PDB" id="6N7R"/>
    </source>
</evidence>
<evidence type="ECO:0007744" key="25">
    <source>
        <dbReference type="PDB" id="6N7X"/>
    </source>
</evidence>
<evidence type="ECO:0007744" key="26">
    <source>
        <dbReference type="PDB" id="7OQC"/>
    </source>
</evidence>
<evidence type="ECO:0007744" key="27">
    <source>
        <dbReference type="PDB" id="7OQE"/>
    </source>
</evidence>
<evidence type="ECO:0007829" key="28">
    <source>
        <dbReference type="PDB" id="5ZWN"/>
    </source>
</evidence>
<evidence type="ECO:0007829" key="29">
    <source>
        <dbReference type="PDB" id="6N7R"/>
    </source>
</evidence>
<reference key="1">
    <citation type="journal article" date="1992" name="Mol. Gen. Genet.">
        <title>The NAM8 gene in Saccharomyces cerevisiae encodes a protein with putative RNA binding motifs and acts as a suppressor of mitochondrial splicing deficiencies when overexpressed.</title>
        <authorList>
            <person name="Ekwall K."/>
            <person name="Kermorgant M."/>
            <person name="Dujardin G."/>
            <person name="Groudinsky O."/>
            <person name="Slonimski P.P."/>
        </authorList>
    </citation>
    <scope>NUCLEOTIDE SEQUENCE [GENOMIC DNA]</scope>
    <scope>FUNCTION</scope>
    <source>
        <strain>R23/50</strain>
    </source>
</reference>
<reference key="2">
    <citation type="submission" date="1992-06" db="EMBL/GenBank/DDBJ databases">
        <title>A yeast MRE2 gene that is essential for meiotic recombination encodes a novel ribonucleoprotein.</title>
        <authorList>
            <person name="Leem S.-H."/>
            <person name="Hayashi A."/>
            <person name="Ajimura M."/>
            <person name="Ogawa H."/>
        </authorList>
    </citation>
    <scope>NUCLEOTIDE SEQUENCE [GENOMIC DNA]</scope>
</reference>
<reference key="3">
    <citation type="journal article" date="1994" name="Science">
        <title>Complete nucleotide sequence of Saccharomyces cerevisiae chromosome VIII.</title>
        <authorList>
            <person name="Johnston M."/>
            <person name="Andrews S."/>
            <person name="Brinkman R."/>
            <person name="Cooper J."/>
            <person name="Ding H."/>
            <person name="Dover J."/>
            <person name="Du Z."/>
            <person name="Favello A."/>
            <person name="Fulton L."/>
            <person name="Gattung S."/>
            <person name="Geisel C."/>
            <person name="Kirsten J."/>
            <person name="Kucaba T."/>
            <person name="Hillier L.W."/>
            <person name="Jier M."/>
            <person name="Johnston L."/>
            <person name="Langston Y."/>
            <person name="Latreille P."/>
            <person name="Louis E.J."/>
            <person name="Macri C."/>
            <person name="Mardis E."/>
            <person name="Menezes S."/>
            <person name="Mouser L."/>
            <person name="Nhan M."/>
            <person name="Rifkin L."/>
            <person name="Riles L."/>
            <person name="St Peter H."/>
            <person name="Trevaskis E."/>
            <person name="Vaughan K."/>
            <person name="Vignati D."/>
            <person name="Wilcox L."/>
            <person name="Wohldman P."/>
            <person name="Waterston R."/>
            <person name="Wilson R."/>
            <person name="Vaudin M."/>
        </authorList>
    </citation>
    <scope>NUCLEOTIDE SEQUENCE [LARGE SCALE GENOMIC DNA]</scope>
    <source>
        <strain>ATCC 204508 / S288c</strain>
    </source>
</reference>
<reference key="4">
    <citation type="journal article" date="2014" name="G3 (Bethesda)">
        <title>The reference genome sequence of Saccharomyces cerevisiae: Then and now.</title>
        <authorList>
            <person name="Engel S.R."/>
            <person name="Dietrich F.S."/>
            <person name="Fisk D.G."/>
            <person name="Binkley G."/>
            <person name="Balakrishnan R."/>
            <person name="Costanzo M.C."/>
            <person name="Dwight S.S."/>
            <person name="Hitz B.C."/>
            <person name="Karra K."/>
            <person name="Nash R.S."/>
            <person name="Weng S."/>
            <person name="Wong E.D."/>
            <person name="Lloyd P."/>
            <person name="Skrzypek M.S."/>
            <person name="Miyasato S.R."/>
            <person name="Simison M."/>
            <person name="Cherry J.M."/>
        </authorList>
    </citation>
    <scope>GENOME REANNOTATION</scope>
    <source>
        <strain>ATCC 204508 / S288c</strain>
    </source>
</reference>
<reference key="5">
    <citation type="journal article" date="1989" name="Mol. Gen. Genet.">
        <title>Novel class of nuclear genes involved in both mRNA splicing and protein synthesis in Saccharomyces cerevisiae mitochondria.</title>
        <authorList>
            <person name="Asher B.E."/>
            <person name="Groudinsky O."/>
            <person name="Dujardin G."/>
            <person name="Altamura N."/>
            <person name="Kermorgant M."/>
            <person name="Slonimski P.P."/>
        </authorList>
    </citation>
    <scope>IDENTIFICATION</scope>
</reference>
<reference key="6">
    <citation type="journal article" date="1995" name="Adv. Biophys.">
        <title>Functions of the yeast meiotic recombination genes, MRE11 and MRE2.</title>
        <authorList>
            <person name="Ogawa H."/>
            <person name="Johzuka K."/>
            <person name="Nakagawa T."/>
            <person name="Leem S.H."/>
            <person name="Hagihara A.H."/>
        </authorList>
    </citation>
    <scope>FUNCTION</scope>
    <scope>DISRUPTION PHENOTYPE</scope>
</reference>
<reference key="7">
    <citation type="journal article" date="1997" name="Genes Cells">
        <title>Involvement of the MRE2 gene of yeast in formation of meiosis-specific double-strand breaks and crossover recombination through RNA splicing.</title>
        <authorList>
            <person name="Nakagawa T."/>
            <person name="Ogawa H."/>
        </authorList>
    </citation>
    <scope>FUNCTION</scope>
</reference>
<reference key="8">
    <citation type="journal article" date="1998" name="RNA">
        <title>A comprehensive biochemical and genetic analysis of the yeast U1 snRNP reveals five novel proteins.</title>
        <authorList>
            <person name="Gottschalk A."/>
            <person name="Tang J."/>
            <person name="Puig O."/>
            <person name="Salgado J."/>
            <person name="Neubauer G."/>
            <person name="Colot H.V."/>
            <person name="Mann M."/>
            <person name="Seraphin B."/>
            <person name="Rosbash M."/>
            <person name="Luehrmann R."/>
            <person name="Fabrizio P."/>
        </authorList>
    </citation>
    <scope>IDENTIFICATION WITHIN THE U1 SNRNP COMPLEX</scope>
</reference>
<reference key="9">
    <citation type="journal article" date="1999" name="Genes Dev.">
        <title>Interaction of the U1 snRNP with nonconserved intronic sequences affects 5' splice site selection.</title>
        <authorList>
            <person name="Puig O."/>
            <person name="Gottschalk A."/>
            <person name="Fabrizio P."/>
            <person name="Seraphin B."/>
        </authorList>
    </citation>
    <scope>FUNCTION</scope>
</reference>
<reference key="10">
    <citation type="journal article" date="2000" name="Mol. Cell">
        <title>A yeast intronic splicing enhancer and Nam8p are required for Mer1p-activated splicing.</title>
        <authorList>
            <person name="Spingola M."/>
            <person name="Ares M. Jr."/>
        </authorList>
    </citation>
    <scope>FUNCTION</scope>
</reference>
<reference key="11">
    <citation type="journal article" date="2011" name="Nucleic Acids Res.">
        <title>Determinants of Nam8-dependent splicing of meiotic pre-mRNAs.</title>
        <authorList>
            <person name="Qiu Z.R."/>
            <person name="Schwer B."/>
            <person name="Shuman S."/>
        </authorList>
    </citation>
    <scope>FUNCTION</scope>
    <scope>DOMAIN</scope>
</reference>
<reference key="12">
    <citation type="journal article" date="2011" name="RNA">
        <title>Defining the Mer1 and Nam8 meiotic splicing regulons by cDNA rescue.</title>
        <authorList>
            <person name="Qiu Z.R."/>
            <person name="Schwer B."/>
            <person name="Shuman S."/>
        </authorList>
    </citation>
    <scope>FUNCTION</scope>
    <scope>DOMAIN</scope>
</reference>
<reference key="13">
    <citation type="journal article" date="2003" name="Nature">
        <title>Global analysis of protein expression in yeast.</title>
        <authorList>
            <person name="Ghaemmaghami S."/>
            <person name="Huh W.-K."/>
            <person name="Bower K."/>
            <person name="Howson R.W."/>
            <person name="Belle A."/>
            <person name="Dephoure N."/>
            <person name="O'Shea E.K."/>
            <person name="Weissman J.S."/>
        </authorList>
    </citation>
    <scope>LEVEL OF PROTEIN EXPRESSION [LARGE SCALE ANALYSIS]</scope>
</reference>
<reference key="14">
    <citation type="journal article" date="2008" name="Mol. Cell. Proteomics">
        <title>A multidimensional chromatography technology for in-depth phosphoproteome analysis.</title>
        <authorList>
            <person name="Albuquerque C.P."/>
            <person name="Smolka M.B."/>
            <person name="Payne S.H."/>
            <person name="Bafna V."/>
            <person name="Eng J."/>
            <person name="Zhou H."/>
        </authorList>
    </citation>
    <scope>IDENTIFICATION BY MASS SPECTROMETRY [LARGE SCALE ANALYSIS]</scope>
</reference>
<reference evidence="25" key="15">
    <citation type="journal article" date="2017" name="Nat. Commun.">
        <title>CryoEM structure of Saccharomyces cerevisiae U1 snRNP offers insight into alternative splicing.</title>
        <authorList>
            <person name="Li X."/>
            <person name="Liu S."/>
            <person name="Jiang J."/>
            <person name="Zhang L."/>
            <person name="Espinosa S."/>
            <person name="Hill R.C."/>
            <person name="Hansen K.C."/>
            <person name="Zhou Z.H."/>
            <person name="Zhao R."/>
        </authorList>
    </citation>
    <scope>STRUCTURE BY ELECTRON MICROSCOPY (3.60 ANGSTROMS) OF THE U1 SNRNP COMPLEX</scope>
    <scope>IDENTIFICATION WITHIN THE U1 SNRNP COMPLEX</scope>
</reference>
<reference evidence="22" key="16">
    <citation type="journal article" date="2018" name="Nature">
        <title>Prespliceosome structure provides insights into spliceosome assembly and regulation.</title>
        <authorList>
            <person name="Plaschka C."/>
            <person name="Lin P.C."/>
            <person name="Charenton C."/>
            <person name="Nagai K."/>
        </authorList>
    </citation>
    <scope>STRUCTURE BY ELECTRON MICROSCOPY (4.00 ANGSTROMS) OF THE PRE-SPLICEOSOME COMPLEX</scope>
    <scope>IDENTIFICATION WITHIN THE U1 SNRNP COMPLEX</scope>
</reference>
<reference evidence="21" key="17">
    <citation type="journal article" date="2018" name="Science">
        <title>Structures of the fully assembled Saccharomyces cerevisiae spliceosome before activation.</title>
        <authorList>
            <person name="Bai R."/>
            <person name="Wan R."/>
            <person name="Yan C."/>
            <person name="Lei J."/>
            <person name="Shi Y."/>
        </authorList>
    </citation>
    <scope>STRUCTURE BY ELECTRON MICROSCOPY (3.30 ANGSTROMS) OF THE SPLICEOSOME</scope>
    <scope>IDENTIFICATION WITHIN THE U1 SNRNP COMPLEX</scope>
</reference>
<reference evidence="23 24" key="18">
    <citation type="journal article" date="2019" name="Nature">
        <title>A unified mechanism for intron and exon definition and back-splicing.</title>
        <authorList>
            <person name="Li X."/>
            <person name="Liu S."/>
            <person name="Zhang L."/>
            <person name="Issaian A."/>
            <person name="Hill R.C."/>
            <person name="Espinosa S."/>
            <person name="Shi S."/>
            <person name="Cui Y."/>
            <person name="Kappel K."/>
            <person name="Das R."/>
            <person name="Hansen K.C."/>
            <person name="Zhou Z.H."/>
            <person name="Zhao R."/>
        </authorList>
    </citation>
    <scope>STRUCTURE BY ELECTRON MICROSCOPY (3.20 ANGSTROMS) OF THE SPLICEOSOMAL E COMPLEX</scope>
    <scope>IDENTIFICATION WITHIN THE U1 SNRNP COMPLEX</scope>
    <scope>DOMAIN</scope>
</reference>
<reference evidence="26 27" key="19">
    <citation type="journal article" date="2021" name="Nature">
        <title>Structural insights into how Prp5 proofreads the pre-mRNA branch site.</title>
        <authorList>
            <person name="Zhang Z."/>
            <person name="Rigo N."/>
            <person name="Dybkov O."/>
            <person name="Fourmann J.B."/>
            <person name="Will C.L."/>
            <person name="Kumar V."/>
            <person name="Urlaub H."/>
            <person name="Stark H."/>
            <person name="Luehrmann R."/>
        </authorList>
    </citation>
    <scope>STRUCTURE BY ELECTRON MICROSCOPY (4.10 ANGSTROMS) OF THE U1 SNRNP COMPLEX</scope>
    <scope>IDENTIFICATION WITHIN THE U1 SNRNP COMPLEX</scope>
</reference>
<gene>
    <name evidence="17" type="primary">NAM8</name>
    <name evidence="18" type="synonym">MRE2</name>
    <name evidence="19" type="synonym">MUD15</name>
    <name type="ordered locus">YHR086W</name>
</gene>
<sequence length="523" mass="56972">MSYKQTTYYPSRGNLVRNDSSPYTNTISSETNNSSTSVLSLQGASNVSLGTTGNQLYMGDLDPTWDKNTVRQIWASLGEANINVRMMWNNTLNNGSRSSMGPKNNQGYCFVDFPSSTHAANALLKNGMLIPNFPNKKLKLNWATSSYSNSNNSLNNVKSGNNCSIFVGDLAPNVTESQLFELFINRYASTSHAKIVHDQVTGMSKGYGFVKFTNSDEQQLALSEMQGVFLNGRAIKVGPTSGQQQHVSGNNDYNRSSSSLNNENVDSRFLSKGQSFLSNGNNNMGFKRNHMSQFIYPVQQQPSLNHFTDPNNTTVFIGGLSSLVTEDELRAYFQPFGTIVYVKIPVGKCCGFVQYVDRLSAEAAIAGMQGFPIANSRVRLSWGRSAKQTALLQQAMLSNSLQVQQQQPGLQQPNYGYIPSSTCEAPVLPDNNVSSTMLPGCQILNYSNPYANANGLGSNNFSFYSNNNATNTQATSLLADTSSMDLSGTGGQQVIMQGSEAVVNSTNAMLNRLEQGSNGFMFA</sequence>
<accession>Q00539</accession>
<accession>D3DL37</accession>
<comment type="function">
    <text evidence="3 4 6 7 8 14 15">Component of the U1 small nuclear ribonucleoprotein complex (U1 snRNP) involved in the initiation of meiotic recombination (PubMed:1603056, PubMed:7625279). Involved in the formation of DSBs at recombination hot-spots through meiosis-specific splicing of REC107 pre-mRNA (PubMed:21788335, PubMed:7625279, PubMed:9112441). Collaborates with MER1 to promote splicing of essential meiotic mRNAs REC10, AMA1, MER3, HFM1, SPO22 and PCH2 (PubMed:10983980, PubMed:21208980, PubMed:21788335). NAM8 interacts with the pre-mRNA downstream of the 5' splice site, in a region of non-conserved sequence and is required for efficient splicing of uncapped RNA precursor (PubMed:10072385).</text>
</comment>
<comment type="subunit">
    <text evidence="9 10 11 12 13 16">Component of the U1 small nuclear ribonucleoprotein complex (U1 snRNP).</text>
</comment>
<comment type="domain">
    <text evidence="7 8 12">The RNA binding domains RRM2 and RRM3 are required for NAM8 meiotic function (PubMed:21208980, PubMed:21788335). Within the U1 snRNP complex, the RRM2 domain of NAM8 is positioned to bind to the intronic region immediately down-stream of nucleotide +13 (PubMed:31485080).</text>
</comment>
<comment type="disruption phenotype">
    <text evidence="14">Affects the meiotic recombination and the formation of viable spores.</text>
</comment>
<comment type="miscellaneous">
    <text evidence="5">Present with 1480 molecules/cell in log phase SD medium.</text>
</comment>
<keyword id="KW-0002">3D-structure</keyword>
<keyword id="KW-0507">mRNA processing</keyword>
<keyword id="KW-0508">mRNA splicing</keyword>
<keyword id="KW-1185">Reference proteome</keyword>
<keyword id="KW-0677">Repeat</keyword>
<keyword id="KW-0694">RNA-binding</keyword>
<keyword id="KW-0747">Spliceosome</keyword>
<dbReference type="EMBL" id="X64763">
    <property type="protein sequence ID" value="CAA46011.1"/>
    <property type="molecule type" value="Genomic_DNA"/>
</dbReference>
<dbReference type="EMBL" id="D11461">
    <property type="protein sequence ID" value="BAA02016.1"/>
    <property type="molecule type" value="Genomic_DNA"/>
</dbReference>
<dbReference type="EMBL" id="U00060">
    <property type="protein sequence ID" value="AAB68928.1"/>
    <property type="molecule type" value="Genomic_DNA"/>
</dbReference>
<dbReference type="EMBL" id="BK006934">
    <property type="protein sequence ID" value="DAA06781.1"/>
    <property type="molecule type" value="Genomic_DNA"/>
</dbReference>
<dbReference type="PIR" id="S46720">
    <property type="entry name" value="S46720"/>
</dbReference>
<dbReference type="RefSeq" id="NP_011954.1">
    <property type="nucleotide sequence ID" value="NM_001179216.1"/>
</dbReference>
<dbReference type="PDB" id="5ZWN">
    <property type="method" value="EM"/>
    <property type="resolution" value="3.30 A"/>
    <property type="chains" value="V=1-523"/>
</dbReference>
<dbReference type="PDB" id="6G90">
    <property type="method" value="EM"/>
    <property type="resolution" value="4.00 A"/>
    <property type="chains" value="F=1-523"/>
</dbReference>
<dbReference type="PDB" id="6N7P">
    <property type="method" value="EM"/>
    <property type="resolution" value="3.60 A"/>
    <property type="chains" value="F=1-523"/>
</dbReference>
<dbReference type="PDB" id="6N7R">
    <property type="method" value="EM"/>
    <property type="resolution" value="3.20 A"/>
    <property type="chains" value="F=1-523"/>
</dbReference>
<dbReference type="PDB" id="6N7X">
    <property type="method" value="EM"/>
    <property type="resolution" value="3.60 A"/>
    <property type="chains" value="F=1-523"/>
</dbReference>
<dbReference type="PDB" id="7OQC">
    <property type="method" value="EM"/>
    <property type="resolution" value="4.10 A"/>
    <property type="chains" value="F=1-523"/>
</dbReference>
<dbReference type="PDB" id="7OQE">
    <property type="method" value="EM"/>
    <property type="resolution" value="5.90 A"/>
    <property type="chains" value="F=1-523"/>
</dbReference>
<dbReference type="PDB" id="8W2O">
    <property type="method" value="EM"/>
    <property type="resolution" value="3.49 A"/>
    <property type="chains" value="F=1-523"/>
</dbReference>
<dbReference type="PDBsum" id="5ZWN"/>
<dbReference type="PDBsum" id="6G90"/>
<dbReference type="PDBsum" id="6N7P"/>
<dbReference type="PDBsum" id="6N7R"/>
<dbReference type="PDBsum" id="6N7X"/>
<dbReference type="PDBsum" id="7OQC"/>
<dbReference type="PDBsum" id="7OQE"/>
<dbReference type="PDBsum" id="8W2O"/>
<dbReference type="EMDB" id="EMD-0360"/>
<dbReference type="EMDB" id="EMD-0361"/>
<dbReference type="EMDB" id="EMD-13029"/>
<dbReference type="EMDB" id="EMD-13033"/>
<dbReference type="EMDB" id="EMD-4364"/>
<dbReference type="EMDB" id="EMD-43753"/>
<dbReference type="EMDB" id="EMD-6973"/>
<dbReference type="EMDB" id="EMD-8622"/>
<dbReference type="SMR" id="Q00539"/>
<dbReference type="BioGRID" id="36521">
    <property type="interactions" value="193"/>
</dbReference>
<dbReference type="ComplexPortal" id="CPX-23">
    <property type="entry name" value="U1 small nuclear ribonucleoprotein complex"/>
</dbReference>
<dbReference type="DIP" id="DIP-2749N"/>
<dbReference type="FunCoup" id="Q00539">
    <property type="interactions" value="240"/>
</dbReference>
<dbReference type="IntAct" id="Q00539">
    <property type="interactions" value="42"/>
</dbReference>
<dbReference type="MINT" id="Q00539"/>
<dbReference type="STRING" id="4932.YHR086W"/>
<dbReference type="GlyGen" id="Q00539">
    <property type="glycosylation" value="1 site"/>
</dbReference>
<dbReference type="iPTMnet" id="Q00539"/>
<dbReference type="PaxDb" id="4932-YHR086W"/>
<dbReference type="PeptideAtlas" id="Q00539"/>
<dbReference type="EnsemblFungi" id="YHR086W_mRNA">
    <property type="protein sequence ID" value="YHR086W"/>
    <property type="gene ID" value="YHR086W"/>
</dbReference>
<dbReference type="GeneID" id="856486"/>
<dbReference type="KEGG" id="sce:YHR086W"/>
<dbReference type="AGR" id="SGD:S000001128"/>
<dbReference type="SGD" id="S000001128">
    <property type="gene designation" value="NAM8"/>
</dbReference>
<dbReference type="VEuPathDB" id="FungiDB:YHR086W"/>
<dbReference type="eggNOG" id="KOG0118">
    <property type="taxonomic scope" value="Eukaryota"/>
</dbReference>
<dbReference type="HOGENOM" id="CLU_016304_7_0_1"/>
<dbReference type="InParanoid" id="Q00539"/>
<dbReference type="OMA" id="VRIFKMQ"/>
<dbReference type="OrthoDB" id="446113at2759"/>
<dbReference type="BioCyc" id="YEAST:G3O-31133-MONOMER"/>
<dbReference type="BioGRID-ORCS" id="856486">
    <property type="hits" value="8 hits in 10 CRISPR screens"/>
</dbReference>
<dbReference type="PRO" id="PR:Q00539"/>
<dbReference type="Proteomes" id="UP000002311">
    <property type="component" value="Chromosome VIII"/>
</dbReference>
<dbReference type="RNAct" id="Q00539">
    <property type="molecule type" value="protein"/>
</dbReference>
<dbReference type="GO" id="GO:0000243">
    <property type="term" value="C:commitment complex"/>
    <property type="evidence" value="ECO:0000353"/>
    <property type="project" value="SGD"/>
</dbReference>
<dbReference type="GO" id="GO:0005737">
    <property type="term" value="C:cytoplasm"/>
    <property type="evidence" value="ECO:0000314"/>
    <property type="project" value="SGD"/>
</dbReference>
<dbReference type="GO" id="GO:0005829">
    <property type="term" value="C:cytosol"/>
    <property type="evidence" value="ECO:0000318"/>
    <property type="project" value="GO_Central"/>
</dbReference>
<dbReference type="GO" id="GO:0005634">
    <property type="term" value="C:nucleus"/>
    <property type="evidence" value="ECO:0000314"/>
    <property type="project" value="SGD"/>
</dbReference>
<dbReference type="GO" id="GO:0005681">
    <property type="term" value="C:spliceosomal complex"/>
    <property type="evidence" value="ECO:0000303"/>
    <property type="project" value="ComplexPortal"/>
</dbReference>
<dbReference type="GO" id="GO:0005685">
    <property type="term" value="C:U1 snRNP"/>
    <property type="evidence" value="ECO:0000314"/>
    <property type="project" value="SGD"/>
</dbReference>
<dbReference type="GO" id="GO:0071004">
    <property type="term" value="C:U2-type prespliceosome"/>
    <property type="evidence" value="ECO:0000314"/>
    <property type="project" value="SGD"/>
</dbReference>
<dbReference type="GO" id="GO:0003729">
    <property type="term" value="F:mRNA binding"/>
    <property type="evidence" value="ECO:0000353"/>
    <property type="project" value="SGD"/>
</dbReference>
<dbReference type="GO" id="GO:0000395">
    <property type="term" value="P:mRNA 5'-splice site recognition"/>
    <property type="evidence" value="ECO:0000303"/>
    <property type="project" value="ComplexPortal"/>
</dbReference>
<dbReference type="GO" id="GO:0006376">
    <property type="term" value="P:mRNA splice site recognition"/>
    <property type="evidence" value="ECO:0000315"/>
    <property type="project" value="SGD"/>
</dbReference>
<dbReference type="GO" id="GO:0000398">
    <property type="term" value="P:mRNA splicing, via spliceosome"/>
    <property type="evidence" value="ECO:0000353"/>
    <property type="project" value="SGD"/>
</dbReference>
<dbReference type="GO" id="GO:0048026">
    <property type="term" value="P:positive regulation of mRNA splicing, via spliceosome"/>
    <property type="evidence" value="ECO:0000315"/>
    <property type="project" value="SGD"/>
</dbReference>
<dbReference type="CDD" id="cd12611">
    <property type="entry name" value="RRM1_NGR1_NAM8_like"/>
    <property type="match status" value="1"/>
</dbReference>
<dbReference type="CDD" id="cd12345">
    <property type="entry name" value="RRM2_SECp43_like"/>
    <property type="match status" value="1"/>
</dbReference>
<dbReference type="CDD" id="cd12346">
    <property type="entry name" value="RRM3_NGR1_NAM8_like"/>
    <property type="match status" value="1"/>
</dbReference>
<dbReference type="FunFam" id="3.30.70.330:FF:000065">
    <property type="entry name" value="mRNA binding post-transcriptional regulator"/>
    <property type="match status" value="1"/>
</dbReference>
<dbReference type="FunFam" id="3.30.70.330:FF:000803">
    <property type="entry name" value="Nam8p"/>
    <property type="match status" value="1"/>
</dbReference>
<dbReference type="Gene3D" id="3.30.70.330">
    <property type="match status" value="3"/>
</dbReference>
<dbReference type="InterPro" id="IPR012677">
    <property type="entry name" value="Nucleotide-bd_a/b_plait_sf"/>
</dbReference>
<dbReference type="InterPro" id="IPR035979">
    <property type="entry name" value="RBD_domain_sf"/>
</dbReference>
<dbReference type="InterPro" id="IPR050825">
    <property type="entry name" value="RBM42_RBP45_47-like"/>
</dbReference>
<dbReference type="InterPro" id="IPR000504">
    <property type="entry name" value="RRM_dom"/>
</dbReference>
<dbReference type="PANTHER" id="PTHR47640:SF10">
    <property type="entry name" value="TRNA SELENOCYSTEINE 1-ASSOCIATED PROTEIN 1-RELATED"/>
    <property type="match status" value="1"/>
</dbReference>
<dbReference type="PANTHER" id="PTHR47640">
    <property type="entry name" value="TRNA SELENOCYSTEINE 1-ASSOCIATED PROTEIN 1-RELATED-RELATED"/>
    <property type="match status" value="1"/>
</dbReference>
<dbReference type="Pfam" id="PF00076">
    <property type="entry name" value="RRM_1"/>
    <property type="match status" value="2"/>
</dbReference>
<dbReference type="SMART" id="SM00360">
    <property type="entry name" value="RRM"/>
    <property type="match status" value="3"/>
</dbReference>
<dbReference type="SUPFAM" id="SSF54928">
    <property type="entry name" value="RNA-binding domain, RBD"/>
    <property type="match status" value="2"/>
</dbReference>
<dbReference type="PROSITE" id="PS50102">
    <property type="entry name" value="RRM"/>
    <property type="match status" value="3"/>
</dbReference>
<feature type="chain" id="PRO_0000081659" description="Protein NAM8">
    <location>
        <begin position="1"/>
        <end position="523"/>
    </location>
</feature>
<feature type="domain" description="RRM 1" evidence="1">
    <location>
        <begin position="54"/>
        <end position="145"/>
    </location>
</feature>
<feature type="domain" description="RRM 2" evidence="1">
    <location>
        <begin position="163"/>
        <end position="242"/>
    </location>
</feature>
<feature type="domain" description="RRM 3" evidence="1">
    <location>
        <begin position="313"/>
        <end position="385"/>
    </location>
</feature>
<feature type="region of interest" description="Disordered" evidence="2">
    <location>
        <begin position="1"/>
        <end position="35"/>
    </location>
</feature>
<feature type="region of interest" description="Disordered" evidence="2">
    <location>
        <begin position="239"/>
        <end position="260"/>
    </location>
</feature>
<feature type="compositionally biased region" description="Low complexity" evidence="2">
    <location>
        <begin position="24"/>
        <end position="35"/>
    </location>
</feature>
<feature type="compositionally biased region" description="Polar residues" evidence="2">
    <location>
        <begin position="240"/>
        <end position="260"/>
    </location>
</feature>
<feature type="sequence conflict" description="In Ref. 1; CAA46011." evidence="20" ref="1">
    <original>F</original>
    <variation>L</variation>
    <location>
        <position position="180"/>
    </location>
</feature>
<feature type="sequence conflict" description="In Ref. 1; CAA46011." evidence="20" ref="1">
    <original>GF</original>
    <variation>VL</variation>
    <location>
        <begin position="208"/>
        <end position="209"/>
    </location>
</feature>
<feature type="strand" evidence="29">
    <location>
        <begin position="293"/>
        <end position="295"/>
    </location>
</feature>
<feature type="strand" evidence="29">
    <location>
        <begin position="306"/>
        <end position="308"/>
    </location>
</feature>
<feature type="strand" evidence="29">
    <location>
        <begin position="314"/>
        <end position="318"/>
    </location>
</feature>
<feature type="helix" evidence="29">
    <location>
        <begin position="326"/>
        <end position="333"/>
    </location>
</feature>
<feature type="helix" evidence="29">
    <location>
        <begin position="334"/>
        <end position="336"/>
    </location>
</feature>
<feature type="strand" evidence="29">
    <location>
        <begin position="339"/>
        <end position="343"/>
    </location>
</feature>
<feature type="strand" evidence="29">
    <location>
        <begin position="348"/>
        <end position="357"/>
    </location>
</feature>
<feature type="helix" evidence="29">
    <location>
        <begin position="358"/>
        <end position="367"/>
    </location>
</feature>
<feature type="strand" evidence="29">
    <location>
        <begin position="368"/>
        <end position="370"/>
    </location>
</feature>
<feature type="strand" evidence="28">
    <location>
        <begin position="373"/>
        <end position="375"/>
    </location>
</feature>
<feature type="strand" evidence="29">
    <location>
        <begin position="379"/>
        <end position="382"/>
    </location>
</feature>
<feature type="helix" evidence="29">
    <location>
        <begin position="387"/>
        <end position="397"/>
    </location>
</feature>
<feature type="strand" evidence="29">
    <location>
        <begin position="415"/>
        <end position="417"/>
    </location>
</feature>
<feature type="strand" evidence="28">
    <location>
        <begin position="439"/>
        <end position="441"/>
    </location>
</feature>
<feature type="strand" evidence="29">
    <location>
        <begin position="444"/>
        <end position="446"/>
    </location>
</feature>
<feature type="strand" evidence="28">
    <location>
        <begin position="493"/>
        <end position="495"/>
    </location>
</feature>
<feature type="helix" evidence="29">
    <location>
        <begin position="501"/>
        <end position="518"/>
    </location>
</feature>
<organism>
    <name type="scientific">Saccharomyces cerevisiae (strain ATCC 204508 / S288c)</name>
    <name type="common">Baker's yeast</name>
    <dbReference type="NCBI Taxonomy" id="559292"/>
    <lineage>
        <taxon>Eukaryota</taxon>
        <taxon>Fungi</taxon>
        <taxon>Dikarya</taxon>
        <taxon>Ascomycota</taxon>
        <taxon>Saccharomycotina</taxon>
        <taxon>Saccharomycetes</taxon>
        <taxon>Saccharomycetales</taxon>
        <taxon>Saccharomycetaceae</taxon>
        <taxon>Saccharomyces</taxon>
    </lineage>
</organism>
<protein>
    <recommendedName>
        <fullName evidence="17">Protein NAM8</fullName>
    </recommendedName>
    <alternativeName>
        <fullName evidence="17">Nuclear accommodation of mitochondria protein 8</fullName>
    </alternativeName>
    <alternativeName>
        <fullName evidence="19">U1 snRNP component NAM8</fullName>
    </alternativeName>
</protein>
<proteinExistence type="evidence at protein level"/>
<name>NAM8_YEAST</name>